<protein>
    <recommendedName>
        <fullName>B-cell lymphoma 6 protein homolog</fullName>
    </recommendedName>
</protein>
<name>BCL6_CHICK</name>
<reference evidence="7" key="1">
    <citation type="journal article" date="2005" name="Genome Biol.">
        <title>Full-length cDNAs from chicken bursal lymphocytes to facilitate gene function analysis.</title>
        <authorList>
            <person name="Caldwell R.B."/>
            <person name="Kierzek A.M."/>
            <person name="Arakawa H."/>
            <person name="Bezzubov Y."/>
            <person name="Zaim J."/>
            <person name="Fiedler P."/>
            <person name="Kutter S."/>
            <person name="Blagodatski A."/>
            <person name="Kostovska D."/>
            <person name="Koter M."/>
            <person name="Plachy J."/>
            <person name="Carninci P."/>
            <person name="Hayashizaki Y."/>
            <person name="Buerstedde J.-M."/>
        </authorList>
    </citation>
    <scope>NUCLEOTIDE SEQUENCE [LARGE SCALE MRNA]</scope>
    <source>
        <strain evidence="7">CB</strain>
        <tissue evidence="7">Bursa of Fabricius</tissue>
    </source>
</reference>
<organism>
    <name type="scientific">Gallus gallus</name>
    <name type="common">Chicken</name>
    <dbReference type="NCBI Taxonomy" id="9031"/>
    <lineage>
        <taxon>Eukaryota</taxon>
        <taxon>Metazoa</taxon>
        <taxon>Chordata</taxon>
        <taxon>Craniata</taxon>
        <taxon>Vertebrata</taxon>
        <taxon>Euteleostomi</taxon>
        <taxon>Archelosauria</taxon>
        <taxon>Archosauria</taxon>
        <taxon>Dinosauria</taxon>
        <taxon>Saurischia</taxon>
        <taxon>Theropoda</taxon>
        <taxon>Coelurosauria</taxon>
        <taxon>Aves</taxon>
        <taxon>Neognathae</taxon>
        <taxon>Galloanserae</taxon>
        <taxon>Galliformes</taxon>
        <taxon>Phasianidae</taxon>
        <taxon>Phasianinae</taxon>
        <taxon>Gallus</taxon>
    </lineage>
</organism>
<accession>Q5ZM39</accession>
<evidence type="ECO:0000250" key="1"/>
<evidence type="ECO:0000250" key="2">
    <source>
        <dbReference type="UniProtKB" id="P41182"/>
    </source>
</evidence>
<evidence type="ECO:0000250" key="3">
    <source>
        <dbReference type="UniProtKB" id="P41183"/>
    </source>
</evidence>
<evidence type="ECO:0000255" key="4">
    <source>
        <dbReference type="PROSITE-ProRule" id="PRU00037"/>
    </source>
</evidence>
<evidence type="ECO:0000255" key="5">
    <source>
        <dbReference type="PROSITE-ProRule" id="PRU00042"/>
    </source>
</evidence>
<evidence type="ECO:0000256" key="6">
    <source>
        <dbReference type="SAM" id="MobiDB-lite"/>
    </source>
</evidence>
<evidence type="ECO:0000312" key="7">
    <source>
        <dbReference type="EMBL" id="CAG31204.1"/>
    </source>
</evidence>
<feature type="chain" id="PRO_0000296300" description="B-cell lymphoma 6 protein homolog">
    <location>
        <begin position="1"/>
        <end position="708"/>
    </location>
</feature>
<feature type="domain" description="BTB" evidence="4">
    <location>
        <begin position="32"/>
        <end position="99"/>
    </location>
</feature>
<feature type="zinc finger region" description="C2H2-type 1" evidence="5">
    <location>
        <begin position="520"/>
        <end position="543"/>
    </location>
</feature>
<feature type="zinc finger region" description="C2H2-type 2" evidence="5">
    <location>
        <begin position="548"/>
        <end position="570"/>
    </location>
</feature>
<feature type="zinc finger region" description="C2H2-type 3" evidence="5">
    <location>
        <begin position="576"/>
        <end position="598"/>
    </location>
</feature>
<feature type="zinc finger region" description="C2H2-type 4" evidence="5">
    <location>
        <begin position="604"/>
        <end position="626"/>
    </location>
</feature>
<feature type="zinc finger region" description="C2H2-type 5" evidence="5">
    <location>
        <begin position="632"/>
        <end position="654"/>
    </location>
</feature>
<feature type="zinc finger region" description="C2H2-type 6" evidence="5">
    <location>
        <begin position="660"/>
        <end position="683"/>
    </location>
</feature>
<feature type="region of interest" description="Disordered" evidence="6">
    <location>
        <begin position="303"/>
        <end position="371"/>
    </location>
</feature>
<feature type="region of interest" description="Disordered" evidence="6">
    <location>
        <begin position="431"/>
        <end position="470"/>
    </location>
</feature>
<feature type="compositionally biased region" description="Basic and acidic residues" evidence="6">
    <location>
        <begin position="303"/>
        <end position="317"/>
    </location>
</feature>
<feature type="compositionally biased region" description="Polar residues" evidence="6">
    <location>
        <begin position="333"/>
        <end position="370"/>
    </location>
</feature>
<feature type="compositionally biased region" description="Polar residues" evidence="6">
    <location>
        <begin position="431"/>
        <end position="454"/>
    </location>
</feature>
<gene>
    <name evidence="2" type="primary">BCL6</name>
    <name type="ORF">RCJMB04_3d20</name>
</gene>
<keyword id="KW-0010">Activator</keyword>
<keyword id="KW-0238">DNA-binding</keyword>
<keyword id="KW-0391">Immunity</keyword>
<keyword id="KW-0395">Inflammatory response</keyword>
<keyword id="KW-0479">Metal-binding</keyword>
<keyword id="KW-0539">Nucleus</keyword>
<keyword id="KW-1185">Reference proteome</keyword>
<keyword id="KW-0677">Repeat</keyword>
<keyword id="KW-0678">Repressor</keyword>
<keyword id="KW-0804">Transcription</keyword>
<keyword id="KW-0805">Transcription regulation</keyword>
<keyword id="KW-0862">Zinc</keyword>
<keyword id="KW-0863">Zinc-finger</keyword>
<sequence>MASPADSCIQFTRHASDVLLNLNRLRSRDILTDVVIIVNREQFRAHKTVLMACSGLFYSIFTDQLKCNLNVINLDPEINPEGFCILLDFMYTSRLNLRENNIMAVMATALYLQMEHVVDTCRRFVKSSEAEMVSAVKTPREEFLAGRMLNHPEVMAYRGRDVSENSMPLQNGSLCNGRAFAPGLFNSLPGSSISYPGYSPLPLNGFLVDDELREMRMPLSELSRVSAFPKERIPCDGSRTIPAEYMRTITDISANMCHATIYSPKEGAAEEARSDMHYSVASGPKPVVPSIRNNPYFSCDKVAKEEERTSSEDEISQHFEPTNTPLDRKGLISPQSPQKSDCQPNSPTESSSSKNARISQNSNSLFTKSPTDPKACNWKKYKFIVLNSLNQSTKQDSADQNEMGTLSPRTYMPMSTCQQSMEPEHLNVQSPTKMSVNGEDSNIPQASRLNNIVNRSRDGSPRSSEGQSPLYMHSSKCSSCGCQSPQHTEMCLHTSGSAFGEEMGETQSEYSDSSCENGAFFCNECDCRFSEEASLKRHSLQVHSDKPYKCDRCQASFRYKGNLASHKTVHTGEKPYRCNICGAQFNRPANLKTHTRIHSGEKPYKCETCGARFVQVAHLRAHVLIHTGEKPYPCEICGTRFRHLQTLKSHLRIHTGEKPYHCEKCNLHFRHKSQLRLHLRQKHGAITNTKVQYRISANEVPPELPKAC</sequence>
<proteinExistence type="evidence at transcript level"/>
<dbReference type="EMBL" id="AJ719545">
    <property type="protein sequence ID" value="CAG31204.1"/>
    <property type="molecule type" value="mRNA"/>
</dbReference>
<dbReference type="RefSeq" id="NP_001012948.1">
    <property type="nucleotide sequence ID" value="NM_001012930.1"/>
</dbReference>
<dbReference type="SMR" id="Q5ZM39"/>
<dbReference type="FunCoup" id="Q5ZM39">
    <property type="interactions" value="427"/>
</dbReference>
<dbReference type="STRING" id="9031.ENSGALP00000011884"/>
<dbReference type="PaxDb" id="9031-ENSGALP00000011884"/>
<dbReference type="GeneID" id="424912"/>
<dbReference type="KEGG" id="gga:424912"/>
<dbReference type="CTD" id="604"/>
<dbReference type="VEuPathDB" id="HostDB:geneid_424912"/>
<dbReference type="eggNOG" id="KOG1721">
    <property type="taxonomic scope" value="Eukaryota"/>
</dbReference>
<dbReference type="InParanoid" id="Q5ZM39"/>
<dbReference type="OrthoDB" id="5560627at2759"/>
<dbReference type="PhylomeDB" id="Q5ZM39"/>
<dbReference type="PRO" id="PR:Q5ZM39"/>
<dbReference type="Proteomes" id="UP000000539">
    <property type="component" value="Unassembled WGS sequence"/>
</dbReference>
<dbReference type="GO" id="GO:0005654">
    <property type="term" value="C:nucleoplasm"/>
    <property type="evidence" value="ECO:0000318"/>
    <property type="project" value="GO_Central"/>
</dbReference>
<dbReference type="GO" id="GO:0005634">
    <property type="term" value="C:nucleus"/>
    <property type="evidence" value="ECO:0000250"/>
    <property type="project" value="UniProtKB"/>
</dbReference>
<dbReference type="GO" id="GO:0003682">
    <property type="term" value="F:chromatin binding"/>
    <property type="evidence" value="ECO:0000250"/>
    <property type="project" value="UniProtKB"/>
</dbReference>
<dbReference type="GO" id="GO:0001227">
    <property type="term" value="F:DNA-binding transcription repressor activity, RNA polymerase II-specific"/>
    <property type="evidence" value="ECO:0000318"/>
    <property type="project" value="GO_Central"/>
</dbReference>
<dbReference type="GO" id="GO:0000978">
    <property type="term" value="F:RNA polymerase II cis-regulatory region sequence-specific DNA binding"/>
    <property type="evidence" value="ECO:0000318"/>
    <property type="project" value="GO_Central"/>
</dbReference>
<dbReference type="GO" id="GO:0043565">
    <property type="term" value="F:sequence-specific DNA binding"/>
    <property type="evidence" value="ECO:0000250"/>
    <property type="project" value="UniProtKB"/>
</dbReference>
<dbReference type="GO" id="GO:0008270">
    <property type="term" value="F:zinc ion binding"/>
    <property type="evidence" value="ECO:0007669"/>
    <property type="project" value="UniProtKB-KW"/>
</dbReference>
<dbReference type="GO" id="GO:0030036">
    <property type="term" value="P:actin cytoskeleton organization"/>
    <property type="evidence" value="ECO:0000250"/>
    <property type="project" value="UniProtKB"/>
</dbReference>
<dbReference type="GO" id="GO:0030183">
    <property type="term" value="P:B cell differentiation"/>
    <property type="evidence" value="ECO:0000250"/>
    <property type="project" value="UniProtKB"/>
</dbReference>
<dbReference type="GO" id="GO:0000902">
    <property type="term" value="P:cell morphogenesis"/>
    <property type="evidence" value="ECO:0000250"/>
    <property type="project" value="UniProtKB"/>
</dbReference>
<dbReference type="GO" id="GO:0006974">
    <property type="term" value="P:DNA damage response"/>
    <property type="evidence" value="ECO:0000250"/>
    <property type="project" value="UniProtKB"/>
</dbReference>
<dbReference type="GO" id="GO:0048821">
    <property type="term" value="P:erythrocyte development"/>
    <property type="evidence" value="ECO:0000250"/>
    <property type="project" value="UniProtKB"/>
</dbReference>
<dbReference type="GO" id="GO:0002467">
    <property type="term" value="P:germinal center formation"/>
    <property type="evidence" value="ECO:0000250"/>
    <property type="project" value="UniProtKB"/>
</dbReference>
<dbReference type="GO" id="GO:0006954">
    <property type="term" value="P:inflammatory response"/>
    <property type="evidence" value="ECO:0007669"/>
    <property type="project" value="UniProtKB-KW"/>
</dbReference>
<dbReference type="GO" id="GO:0043066">
    <property type="term" value="P:negative regulation of apoptotic process"/>
    <property type="evidence" value="ECO:0000250"/>
    <property type="project" value="UniProtKB"/>
</dbReference>
<dbReference type="GO" id="GO:0030308">
    <property type="term" value="P:negative regulation of cell growth"/>
    <property type="evidence" value="ECO:0000250"/>
    <property type="project" value="UniProtKB"/>
</dbReference>
<dbReference type="GO" id="GO:0008285">
    <property type="term" value="P:negative regulation of cell population proliferation"/>
    <property type="evidence" value="ECO:0000250"/>
    <property type="project" value="UniProtKB"/>
</dbReference>
<dbReference type="GO" id="GO:0001953">
    <property type="term" value="P:negative regulation of cell-matrix adhesion"/>
    <property type="evidence" value="ECO:0000250"/>
    <property type="project" value="UniProtKB"/>
</dbReference>
<dbReference type="GO" id="GO:0045892">
    <property type="term" value="P:negative regulation of DNA-templated transcription"/>
    <property type="evidence" value="ECO:0000250"/>
    <property type="project" value="UniProtKB"/>
</dbReference>
<dbReference type="GO" id="GO:0048294">
    <property type="term" value="P:negative regulation of isotype switching to IgE isotypes"/>
    <property type="evidence" value="ECO:0000250"/>
    <property type="project" value="UniProtKB"/>
</dbReference>
<dbReference type="GO" id="GO:0032764">
    <property type="term" value="P:negative regulation of mast cell cytokine production"/>
    <property type="evidence" value="ECO:0000250"/>
    <property type="project" value="UniProtKB"/>
</dbReference>
<dbReference type="GO" id="GO:0035024">
    <property type="term" value="P:negative regulation of Rho protein signal transduction"/>
    <property type="evidence" value="ECO:0000250"/>
    <property type="project" value="UniProtKB"/>
</dbReference>
<dbReference type="GO" id="GO:0000122">
    <property type="term" value="P:negative regulation of transcription by RNA polymerase II"/>
    <property type="evidence" value="ECO:0000250"/>
    <property type="project" value="UniProtKB"/>
</dbReference>
<dbReference type="GO" id="GO:0002829">
    <property type="term" value="P:negative regulation of type 2 immune response"/>
    <property type="evidence" value="ECO:0000250"/>
    <property type="project" value="UniProtKB"/>
</dbReference>
<dbReference type="GO" id="GO:0043065">
    <property type="term" value="P:positive regulation of apoptotic process"/>
    <property type="evidence" value="ECO:0000250"/>
    <property type="project" value="UniProtKB"/>
</dbReference>
<dbReference type="GO" id="GO:0030890">
    <property type="term" value="P:positive regulation of B cell proliferation"/>
    <property type="evidence" value="ECO:0000250"/>
    <property type="project" value="UniProtKB"/>
</dbReference>
<dbReference type="GO" id="GO:0008104">
    <property type="term" value="P:protein localization"/>
    <property type="evidence" value="ECO:0000250"/>
    <property type="project" value="UniProtKB"/>
</dbReference>
<dbReference type="GO" id="GO:0045595">
    <property type="term" value="P:regulation of cell differentiation"/>
    <property type="evidence" value="ECO:0000318"/>
    <property type="project" value="GO_Central"/>
</dbReference>
<dbReference type="GO" id="GO:0042127">
    <property type="term" value="P:regulation of cell population proliferation"/>
    <property type="evidence" value="ECO:0000318"/>
    <property type="project" value="GO_Central"/>
</dbReference>
<dbReference type="GO" id="GO:0001817">
    <property type="term" value="P:regulation of cytokine production"/>
    <property type="evidence" value="ECO:0000318"/>
    <property type="project" value="GO_Central"/>
</dbReference>
<dbReference type="GO" id="GO:0002682">
    <property type="term" value="P:regulation of immune system process"/>
    <property type="evidence" value="ECO:0000318"/>
    <property type="project" value="GO_Central"/>
</dbReference>
<dbReference type="GO" id="GO:0050727">
    <property type="term" value="P:regulation of inflammatory response"/>
    <property type="evidence" value="ECO:0000250"/>
    <property type="project" value="UniProtKB"/>
</dbReference>
<dbReference type="GO" id="GO:0043380">
    <property type="term" value="P:regulation of memory T cell differentiation"/>
    <property type="evidence" value="ECO:0000250"/>
    <property type="project" value="UniProtKB"/>
</dbReference>
<dbReference type="GO" id="GO:0007266">
    <property type="term" value="P:Rho protein signal transduction"/>
    <property type="evidence" value="ECO:0000250"/>
    <property type="project" value="UniProtKB"/>
</dbReference>
<dbReference type="GO" id="GO:0007283">
    <property type="term" value="P:spermatogenesis"/>
    <property type="evidence" value="ECO:0000250"/>
    <property type="project" value="UniProtKB"/>
</dbReference>
<dbReference type="GO" id="GO:0042092">
    <property type="term" value="P:type 2 immune response"/>
    <property type="evidence" value="ECO:0000318"/>
    <property type="project" value="GO_Central"/>
</dbReference>
<dbReference type="CDD" id="cd18331">
    <property type="entry name" value="BTB_POZ_ZBTB27_BCL6"/>
    <property type="match status" value="1"/>
</dbReference>
<dbReference type="FunFam" id="3.30.160.60:FF:000105">
    <property type="entry name" value="B-cell CLL/lymphoma 6, member B"/>
    <property type="match status" value="2"/>
</dbReference>
<dbReference type="FunFam" id="3.30.160.60:FF:000289">
    <property type="entry name" value="B-cell CLL/lymphoma 6, member B"/>
    <property type="match status" value="1"/>
</dbReference>
<dbReference type="FunFam" id="3.30.160.60:FF:000457">
    <property type="entry name" value="B-cell lymphoma 6 protein-like"/>
    <property type="match status" value="1"/>
</dbReference>
<dbReference type="FunFam" id="3.30.160.60:FF:000468">
    <property type="entry name" value="B-cell lymphoma 6 protein-like"/>
    <property type="match status" value="1"/>
</dbReference>
<dbReference type="FunFam" id="3.30.710.10:FF:000025">
    <property type="entry name" value="B-cell lymphoma 6 protein-like"/>
    <property type="match status" value="1"/>
</dbReference>
<dbReference type="FunFam" id="3.30.160.60:FF:001790">
    <property type="entry name" value="BCL6A, transcription repressor a"/>
    <property type="match status" value="1"/>
</dbReference>
<dbReference type="Gene3D" id="3.30.160.60">
    <property type="entry name" value="Classic Zinc Finger"/>
    <property type="match status" value="6"/>
</dbReference>
<dbReference type="Gene3D" id="3.30.710.10">
    <property type="entry name" value="Potassium Channel Kv1.1, Chain A"/>
    <property type="match status" value="1"/>
</dbReference>
<dbReference type="InterPro" id="IPR000210">
    <property type="entry name" value="BTB/POZ_dom"/>
</dbReference>
<dbReference type="InterPro" id="IPR011333">
    <property type="entry name" value="SKP1/BTB/POZ_sf"/>
</dbReference>
<dbReference type="InterPro" id="IPR036236">
    <property type="entry name" value="Znf_C2H2_sf"/>
</dbReference>
<dbReference type="InterPro" id="IPR013087">
    <property type="entry name" value="Znf_C2H2_type"/>
</dbReference>
<dbReference type="PANTHER" id="PTHR24394:SF36">
    <property type="entry name" value="B-CELL LYMPHOMA 6 PROTEIN ISOFORM X1"/>
    <property type="match status" value="1"/>
</dbReference>
<dbReference type="PANTHER" id="PTHR24394">
    <property type="entry name" value="ZINC FINGER PROTEIN"/>
    <property type="match status" value="1"/>
</dbReference>
<dbReference type="Pfam" id="PF00651">
    <property type="entry name" value="BTB"/>
    <property type="match status" value="1"/>
</dbReference>
<dbReference type="Pfam" id="PF00096">
    <property type="entry name" value="zf-C2H2"/>
    <property type="match status" value="4"/>
</dbReference>
<dbReference type="SMART" id="SM00225">
    <property type="entry name" value="BTB"/>
    <property type="match status" value="1"/>
</dbReference>
<dbReference type="SMART" id="SM00355">
    <property type="entry name" value="ZnF_C2H2"/>
    <property type="match status" value="6"/>
</dbReference>
<dbReference type="SUPFAM" id="SSF57667">
    <property type="entry name" value="beta-beta-alpha zinc fingers"/>
    <property type="match status" value="3"/>
</dbReference>
<dbReference type="SUPFAM" id="SSF54695">
    <property type="entry name" value="POZ domain"/>
    <property type="match status" value="1"/>
</dbReference>
<dbReference type="PROSITE" id="PS50097">
    <property type="entry name" value="BTB"/>
    <property type="match status" value="1"/>
</dbReference>
<dbReference type="PROSITE" id="PS00028">
    <property type="entry name" value="ZINC_FINGER_C2H2_1"/>
    <property type="match status" value="6"/>
</dbReference>
<dbReference type="PROSITE" id="PS50157">
    <property type="entry name" value="ZINC_FINGER_C2H2_2"/>
    <property type="match status" value="6"/>
</dbReference>
<comment type="function">
    <text evidence="1">Transcriptional repressor mainly required for germinal center (GC) formation and antibody affinity maturation which has different mechanisms of action specific to the lineage and biological functions. Forms complexes with different corepressors and histone deacetylases to repress the transcriptional expression of different subsets of target genes. Represses its target genes by binding directly to the DNA sequence 5'-TTCCTAGAA-3' (BCL6-binding site) or indirectly by repressing the transcriptional activity of transcription factors. In GC B-cells, represses genes that function in differentiation, inflammation, apoptosis and cell cycle control, also autoregulates its transcriptional expression and up-regulates, indirectly, the expression of some genes important for GC reactions, such as AICDA, through the repression of microRNAs expression. An important function is to allow GC B-cells to proliferate very rapidly in response to T-cell dependent antigens and tolerate the physiological DNA breaks required for immunglobulin class switch recombination and somatic hypermutation without inducing a p53/TP53-dependent apoptotic response. In follicular helper CD4(+) T-cells (T(FH) cells), promotes the expression of T(FH)-related genes but inhibits the differentiation of T(H)1, T(H)2 and T(H)17 cells. Also required for the establishment and maintenance of immunological memory for both T- and B-cells. Suppresses macrophage proliferation through competition with STAT5 for STAT-binding motifs binding on certain target genes, such as CCL2 and CCND2. In response to genotoxic stress, controls cell cycle arrest in GC B-cells in both p53/TP53-dependedent and -independent manners. Besides, also controls neurogenesis through the alteration of the composition of NOTCH-dependent transcriptional complexes at selective NOTCH targets, such as HES5, including the recruitment of the deacetylase SIRT1 and resulting in an epigenetic silencing leading to neuronal differentiation (By similarity).</text>
</comment>
<comment type="subcellular location">
    <subcellularLocation>
        <location evidence="3">Nucleus</location>
    </subcellularLocation>
</comment>